<keyword id="KW-1185">Reference proteome</keyword>
<name>YI014_YEAST</name>
<reference key="1">
    <citation type="journal article" date="1997" name="Nature">
        <title>The nucleotide sequence of Saccharomyces cerevisiae chromosome IX.</title>
        <authorList>
            <person name="Churcher C.M."/>
            <person name="Bowman S."/>
            <person name="Badcock K."/>
            <person name="Bankier A.T."/>
            <person name="Brown D."/>
            <person name="Chillingworth T."/>
            <person name="Connor R."/>
            <person name="Devlin K."/>
            <person name="Gentles S."/>
            <person name="Hamlin N."/>
            <person name="Harris D.E."/>
            <person name="Horsnell T."/>
            <person name="Hunt S."/>
            <person name="Jagels K."/>
            <person name="Jones M."/>
            <person name="Lye G."/>
            <person name="Moule S."/>
            <person name="Odell C."/>
            <person name="Pearson D."/>
            <person name="Rajandream M.A."/>
            <person name="Rice P."/>
            <person name="Rowley N."/>
            <person name="Skelton J."/>
            <person name="Smith V."/>
            <person name="Walsh S.V."/>
            <person name="Whitehead S."/>
            <person name="Barrell B.G."/>
        </authorList>
    </citation>
    <scope>NUCLEOTIDE SEQUENCE [LARGE SCALE GENOMIC DNA]</scope>
    <source>
        <strain>ATCC 204508 / S288c</strain>
    </source>
</reference>
<reference key="2">
    <citation type="journal article" date="2014" name="G3 (Bethesda)">
        <title>The reference genome sequence of Saccharomyces cerevisiae: Then and now.</title>
        <authorList>
            <person name="Engel S.R."/>
            <person name="Dietrich F.S."/>
            <person name="Fisk D.G."/>
            <person name="Binkley G."/>
            <person name="Balakrishnan R."/>
            <person name="Costanzo M.C."/>
            <person name="Dwight S.S."/>
            <person name="Hitz B.C."/>
            <person name="Karra K."/>
            <person name="Nash R.S."/>
            <person name="Weng S."/>
            <person name="Wong E.D."/>
            <person name="Lloyd P."/>
            <person name="Skrzypek M.S."/>
            <person name="Miyasato S.R."/>
            <person name="Simison M."/>
            <person name="Cherry J.M."/>
        </authorList>
    </citation>
    <scope>GENOME REANNOTATION</scope>
    <source>
        <strain>ATCC 204508 / S288c</strain>
    </source>
</reference>
<proteinExistence type="predicted"/>
<dbReference type="EMBL" id="Z46881">
    <property type="protein sequence ID" value="CAA86978.1"/>
    <property type="molecule type" value="Genomic_DNA"/>
</dbReference>
<dbReference type="EMBL" id="BK006942">
    <property type="protein sequence ID" value="DAA08531.1"/>
    <property type="molecule type" value="Genomic_DNA"/>
</dbReference>
<dbReference type="PIR" id="S49968">
    <property type="entry name" value="S49968"/>
</dbReference>
<dbReference type="BioGRID" id="34975">
    <property type="interactions" value="78"/>
</dbReference>
<dbReference type="FunCoup" id="Q02598">
    <property type="interactions" value="33"/>
</dbReference>
<dbReference type="STRING" id="4932.YIL014C-A"/>
<dbReference type="CarbonylDB" id="Q02598"/>
<dbReference type="PaxDb" id="4932-YIL014C-A"/>
<dbReference type="EnsemblFungi" id="YIL014C-A_mRNA">
    <property type="protein sequence ID" value="YIL014C-A"/>
    <property type="gene ID" value="YIL014C-A"/>
</dbReference>
<dbReference type="GeneID" id="854799"/>
<dbReference type="KEGG" id="sce:YIL014C-A"/>
<dbReference type="AGR" id="SGD:S000003536"/>
<dbReference type="SGD" id="S000003536">
    <property type="gene designation" value="YIL014C-A"/>
</dbReference>
<dbReference type="VEuPathDB" id="FungiDB:YIL014C-A"/>
<dbReference type="GeneTree" id="ENSGT00940000182265"/>
<dbReference type="HOGENOM" id="CLU_2252153_0_0_1"/>
<dbReference type="InParanoid" id="Q02598"/>
<dbReference type="OrthoDB" id="4037836at2759"/>
<dbReference type="BioCyc" id="YEAST:G3O-31456-MONOMER"/>
<dbReference type="BioGRID-ORCS" id="854799">
    <property type="hits" value="0 hits in 10 CRISPR screens"/>
</dbReference>
<dbReference type="PRO" id="PR:Q02598"/>
<dbReference type="Proteomes" id="UP000002311">
    <property type="component" value="Chromosome IX"/>
</dbReference>
<dbReference type="RNAct" id="Q02598">
    <property type="molecule type" value="protein"/>
</dbReference>
<feature type="chain" id="PRO_0000245404" description="Uncharacterized protein YIL014C-A">
    <location>
        <begin position="1"/>
        <end position="104"/>
    </location>
</feature>
<organism>
    <name type="scientific">Saccharomyces cerevisiae (strain ATCC 204508 / S288c)</name>
    <name type="common">Baker's yeast</name>
    <dbReference type="NCBI Taxonomy" id="559292"/>
    <lineage>
        <taxon>Eukaryota</taxon>
        <taxon>Fungi</taxon>
        <taxon>Dikarya</taxon>
        <taxon>Ascomycota</taxon>
        <taxon>Saccharomycotina</taxon>
        <taxon>Saccharomycetes</taxon>
        <taxon>Saccharomycetales</taxon>
        <taxon>Saccharomycetaceae</taxon>
        <taxon>Saccharomyces</taxon>
    </lineage>
</organism>
<protein>
    <recommendedName>
        <fullName>Uncharacterized protein YIL014C-A</fullName>
    </recommendedName>
</protein>
<gene>
    <name type="ordered locus">YIL014C-A</name>
</gene>
<sequence length="104" mass="11664">MDIDMNYPSITTLMSNESANLLIIWGNATPDISYLSYTTNPMLGDYVLNVSAINGCTEELIATHLVPTLENATQWVYDAGEYWDNYSFTDESTPLPGLSWPFNE</sequence>
<accession>Q02598</accession>
<accession>D6VVR5</accession>